<sequence>MHRYRSHTCAALRKSDVGETVRLSGWVHRVRDHGGVLFIDLRDHYGITQVVADPDSPAFKVAETVRGEWVIRIDGLVKARSEDTINKGMATGEIELYAQEIEVLGVAKELPLPVFGEPEYPEDVRLKYRFLDLRRETLHRNIVKRTQIISSMRKGMGDLGFAEYTTPILTASSPEGARDFLVPSRIHEGQFFALPQAPQQYKQLLMVAGFDRYFQIAPCFRDEDPRADRLPGEFYQLDVEMSFVTQEDVWTTMEPMMTAVFEQFAEGKPVTKQWPRIPYDESIRKYGSDKPDLRNPIVMEAVTEHFDGSGFKVFANMIASNPKVQVWAIPAKTGGSRAFCDRMNAWAQSQGQPGLGYIFWKEEEGKVAGSGPLAKNIGEERTEALRQQLGLEAGDACFFVAGDPAKFYKFAGEARTRAADELNLIDRDRFEMCWIVDFPFFEYNEEEKKIDFAHNPFSMPQGGMEALEGQDPLSIKAFQYDAVCNGFEIASGSIRNQSPELMVKAFEKVGLSQSDVEERFGGLYRAFQYGAPPHGGCAFGIDRVVMLLVGAKNLREITLFPMNQQAQDLLMNAPSPATPTQLRELALRVVPSKKD</sequence>
<dbReference type="EC" id="6.1.1.23" evidence="1"/>
<dbReference type="EMBL" id="AE007869">
    <property type="protein sequence ID" value="AAK86957.1"/>
    <property type="molecule type" value="Genomic_DNA"/>
</dbReference>
<dbReference type="PIR" id="AH2718">
    <property type="entry name" value="AH2718"/>
</dbReference>
<dbReference type="PIR" id="D97500">
    <property type="entry name" value="D97500"/>
</dbReference>
<dbReference type="RefSeq" id="NP_354172.1">
    <property type="nucleotide sequence ID" value="NC_003062.2"/>
</dbReference>
<dbReference type="RefSeq" id="WP_010971433.1">
    <property type="nucleotide sequence ID" value="NC_003062.2"/>
</dbReference>
<dbReference type="SMR" id="Q8UG87"/>
<dbReference type="STRING" id="176299.Atu1153"/>
<dbReference type="EnsemblBacteria" id="AAK86957">
    <property type="protein sequence ID" value="AAK86957"/>
    <property type="gene ID" value="Atu1153"/>
</dbReference>
<dbReference type="GeneID" id="1133191"/>
<dbReference type="KEGG" id="atu:Atu1153"/>
<dbReference type="PATRIC" id="fig|176299.10.peg.1172"/>
<dbReference type="eggNOG" id="COG0173">
    <property type="taxonomic scope" value="Bacteria"/>
</dbReference>
<dbReference type="HOGENOM" id="CLU_014330_3_2_5"/>
<dbReference type="OrthoDB" id="9802326at2"/>
<dbReference type="PhylomeDB" id="Q8UG87"/>
<dbReference type="BioCyc" id="AGRO:ATU1153-MONOMER"/>
<dbReference type="Proteomes" id="UP000000813">
    <property type="component" value="Chromosome circular"/>
</dbReference>
<dbReference type="GO" id="GO:0005737">
    <property type="term" value="C:cytoplasm"/>
    <property type="evidence" value="ECO:0007669"/>
    <property type="project" value="UniProtKB-SubCell"/>
</dbReference>
<dbReference type="GO" id="GO:0004815">
    <property type="term" value="F:aspartate-tRNA ligase activity"/>
    <property type="evidence" value="ECO:0007669"/>
    <property type="project" value="UniProtKB-UniRule"/>
</dbReference>
<dbReference type="GO" id="GO:0050560">
    <property type="term" value="F:aspartate-tRNA(Asn) ligase activity"/>
    <property type="evidence" value="ECO:0007669"/>
    <property type="project" value="UniProtKB-EC"/>
</dbReference>
<dbReference type="GO" id="GO:0005524">
    <property type="term" value="F:ATP binding"/>
    <property type="evidence" value="ECO:0007669"/>
    <property type="project" value="UniProtKB-UniRule"/>
</dbReference>
<dbReference type="GO" id="GO:0003676">
    <property type="term" value="F:nucleic acid binding"/>
    <property type="evidence" value="ECO:0007669"/>
    <property type="project" value="InterPro"/>
</dbReference>
<dbReference type="GO" id="GO:0006422">
    <property type="term" value="P:aspartyl-tRNA aminoacylation"/>
    <property type="evidence" value="ECO:0007669"/>
    <property type="project" value="UniProtKB-UniRule"/>
</dbReference>
<dbReference type="CDD" id="cd00777">
    <property type="entry name" value="AspRS_core"/>
    <property type="match status" value="1"/>
</dbReference>
<dbReference type="CDD" id="cd04317">
    <property type="entry name" value="EcAspRS_like_N"/>
    <property type="match status" value="1"/>
</dbReference>
<dbReference type="Gene3D" id="3.30.930.10">
    <property type="entry name" value="Bira Bifunctional Protein, Domain 2"/>
    <property type="match status" value="1"/>
</dbReference>
<dbReference type="Gene3D" id="3.30.1360.30">
    <property type="entry name" value="GAD-like domain"/>
    <property type="match status" value="1"/>
</dbReference>
<dbReference type="Gene3D" id="2.40.50.140">
    <property type="entry name" value="Nucleic acid-binding proteins"/>
    <property type="match status" value="1"/>
</dbReference>
<dbReference type="HAMAP" id="MF_00044">
    <property type="entry name" value="Asp_tRNA_synth_type1"/>
    <property type="match status" value="1"/>
</dbReference>
<dbReference type="InterPro" id="IPR004364">
    <property type="entry name" value="Aa-tRNA-synt_II"/>
</dbReference>
<dbReference type="InterPro" id="IPR006195">
    <property type="entry name" value="aa-tRNA-synth_II"/>
</dbReference>
<dbReference type="InterPro" id="IPR045864">
    <property type="entry name" value="aa-tRNA-synth_II/BPL/LPL"/>
</dbReference>
<dbReference type="InterPro" id="IPR004524">
    <property type="entry name" value="Asp-tRNA-ligase_1"/>
</dbReference>
<dbReference type="InterPro" id="IPR047089">
    <property type="entry name" value="Asp-tRNA-ligase_1_N"/>
</dbReference>
<dbReference type="InterPro" id="IPR002312">
    <property type="entry name" value="Asp/Asn-tRNA-synth_IIb"/>
</dbReference>
<dbReference type="InterPro" id="IPR047090">
    <property type="entry name" value="AspRS_core"/>
</dbReference>
<dbReference type="InterPro" id="IPR004115">
    <property type="entry name" value="GAD-like_sf"/>
</dbReference>
<dbReference type="InterPro" id="IPR029351">
    <property type="entry name" value="GAD_dom"/>
</dbReference>
<dbReference type="InterPro" id="IPR012340">
    <property type="entry name" value="NA-bd_OB-fold"/>
</dbReference>
<dbReference type="InterPro" id="IPR004365">
    <property type="entry name" value="NA-bd_OB_tRNA"/>
</dbReference>
<dbReference type="NCBIfam" id="TIGR00459">
    <property type="entry name" value="aspS_bact"/>
    <property type="match status" value="1"/>
</dbReference>
<dbReference type="NCBIfam" id="NF001750">
    <property type="entry name" value="PRK00476.1"/>
    <property type="match status" value="1"/>
</dbReference>
<dbReference type="PANTHER" id="PTHR22594:SF5">
    <property type="entry name" value="ASPARTATE--TRNA LIGASE, MITOCHONDRIAL"/>
    <property type="match status" value="1"/>
</dbReference>
<dbReference type="PANTHER" id="PTHR22594">
    <property type="entry name" value="ASPARTYL/LYSYL-TRNA SYNTHETASE"/>
    <property type="match status" value="1"/>
</dbReference>
<dbReference type="Pfam" id="PF02938">
    <property type="entry name" value="GAD"/>
    <property type="match status" value="1"/>
</dbReference>
<dbReference type="Pfam" id="PF00152">
    <property type="entry name" value="tRNA-synt_2"/>
    <property type="match status" value="1"/>
</dbReference>
<dbReference type="Pfam" id="PF01336">
    <property type="entry name" value="tRNA_anti-codon"/>
    <property type="match status" value="1"/>
</dbReference>
<dbReference type="PRINTS" id="PR01042">
    <property type="entry name" value="TRNASYNTHASP"/>
</dbReference>
<dbReference type="SUPFAM" id="SSF55681">
    <property type="entry name" value="Class II aaRS and biotin synthetases"/>
    <property type="match status" value="1"/>
</dbReference>
<dbReference type="SUPFAM" id="SSF55261">
    <property type="entry name" value="GAD domain-like"/>
    <property type="match status" value="1"/>
</dbReference>
<dbReference type="SUPFAM" id="SSF50249">
    <property type="entry name" value="Nucleic acid-binding proteins"/>
    <property type="match status" value="1"/>
</dbReference>
<dbReference type="PROSITE" id="PS50862">
    <property type="entry name" value="AA_TRNA_LIGASE_II"/>
    <property type="match status" value="1"/>
</dbReference>
<accession>Q8UG87</accession>
<name>SYDND_AGRFC</name>
<organism>
    <name type="scientific">Agrobacterium fabrum (strain C58 / ATCC 33970)</name>
    <name type="common">Agrobacterium tumefaciens (strain C58)</name>
    <dbReference type="NCBI Taxonomy" id="176299"/>
    <lineage>
        <taxon>Bacteria</taxon>
        <taxon>Pseudomonadati</taxon>
        <taxon>Pseudomonadota</taxon>
        <taxon>Alphaproteobacteria</taxon>
        <taxon>Hyphomicrobiales</taxon>
        <taxon>Rhizobiaceae</taxon>
        <taxon>Rhizobium/Agrobacterium group</taxon>
        <taxon>Agrobacterium</taxon>
        <taxon>Agrobacterium tumefaciens complex</taxon>
    </lineage>
</organism>
<evidence type="ECO:0000255" key="1">
    <source>
        <dbReference type="HAMAP-Rule" id="MF_00044"/>
    </source>
</evidence>
<protein>
    <recommendedName>
        <fullName evidence="1">Aspartate--tRNA(Asp/Asn) ligase</fullName>
        <ecNumber evidence="1">6.1.1.23</ecNumber>
    </recommendedName>
    <alternativeName>
        <fullName evidence="1">Aspartyl-tRNA synthetase</fullName>
        <shortName evidence="1">AspRS</shortName>
    </alternativeName>
    <alternativeName>
        <fullName evidence="1">Non-discriminating aspartyl-tRNA synthetase</fullName>
        <shortName evidence="1">ND-AspRS</shortName>
    </alternativeName>
</protein>
<comment type="function">
    <text evidence="1">Aspartyl-tRNA synthetase with relaxed tRNA specificity since it is able to aspartylate not only its cognate tRNA(Asp) but also tRNA(Asn). Reaction proceeds in two steps: L-aspartate is first activated by ATP to form Asp-AMP and then transferred to the acceptor end of tRNA(Asp/Asn).</text>
</comment>
<comment type="catalytic activity">
    <reaction evidence="1">
        <text>tRNA(Asx) + L-aspartate + ATP = L-aspartyl-tRNA(Asx) + AMP + diphosphate</text>
        <dbReference type="Rhea" id="RHEA:18349"/>
        <dbReference type="Rhea" id="RHEA-COMP:9710"/>
        <dbReference type="Rhea" id="RHEA-COMP:9711"/>
        <dbReference type="ChEBI" id="CHEBI:29991"/>
        <dbReference type="ChEBI" id="CHEBI:30616"/>
        <dbReference type="ChEBI" id="CHEBI:33019"/>
        <dbReference type="ChEBI" id="CHEBI:78442"/>
        <dbReference type="ChEBI" id="CHEBI:78516"/>
        <dbReference type="ChEBI" id="CHEBI:456215"/>
        <dbReference type="EC" id="6.1.1.23"/>
    </reaction>
</comment>
<comment type="subunit">
    <text evidence="1">Homodimer.</text>
</comment>
<comment type="subcellular location">
    <subcellularLocation>
        <location evidence="1">Cytoplasm</location>
    </subcellularLocation>
</comment>
<comment type="similarity">
    <text evidence="1">Belongs to the class-II aminoacyl-tRNA synthetase family. Type 1 subfamily.</text>
</comment>
<proteinExistence type="inferred from homology"/>
<feature type="chain" id="PRO_0000110816" description="Aspartate--tRNA(Asp/Asn) ligase">
    <location>
        <begin position="1"/>
        <end position="595"/>
    </location>
</feature>
<feature type="region of interest" description="Aspartate" evidence="1">
    <location>
        <begin position="199"/>
        <end position="202"/>
    </location>
</feature>
<feature type="binding site" evidence="1">
    <location>
        <position position="175"/>
    </location>
    <ligand>
        <name>L-aspartate</name>
        <dbReference type="ChEBI" id="CHEBI:29991"/>
    </ligand>
</feature>
<feature type="binding site" evidence="1">
    <location>
        <begin position="221"/>
        <end position="223"/>
    </location>
    <ligand>
        <name>ATP</name>
        <dbReference type="ChEBI" id="CHEBI:30616"/>
    </ligand>
</feature>
<feature type="binding site" evidence="1">
    <location>
        <position position="221"/>
    </location>
    <ligand>
        <name>L-aspartate</name>
        <dbReference type="ChEBI" id="CHEBI:29991"/>
    </ligand>
</feature>
<feature type="binding site" evidence="1">
    <location>
        <position position="454"/>
    </location>
    <ligand>
        <name>L-aspartate</name>
        <dbReference type="ChEBI" id="CHEBI:29991"/>
    </ligand>
</feature>
<feature type="binding site" evidence="1">
    <location>
        <position position="488"/>
    </location>
    <ligand>
        <name>ATP</name>
        <dbReference type="ChEBI" id="CHEBI:30616"/>
    </ligand>
</feature>
<feature type="binding site" evidence="1">
    <location>
        <position position="495"/>
    </location>
    <ligand>
        <name>L-aspartate</name>
        <dbReference type="ChEBI" id="CHEBI:29991"/>
    </ligand>
</feature>
<feature type="binding site" evidence="1">
    <location>
        <begin position="540"/>
        <end position="543"/>
    </location>
    <ligand>
        <name>ATP</name>
        <dbReference type="ChEBI" id="CHEBI:30616"/>
    </ligand>
</feature>
<feature type="site" description="Important for tRNA non-discrimination" evidence="1">
    <location>
        <position position="33"/>
    </location>
</feature>
<gene>
    <name evidence="1" type="primary">aspS</name>
    <name type="ordered locus">Atu1153</name>
    <name type="ORF">AGR_C_2136</name>
</gene>
<keyword id="KW-0030">Aminoacyl-tRNA synthetase</keyword>
<keyword id="KW-0067">ATP-binding</keyword>
<keyword id="KW-0963">Cytoplasm</keyword>
<keyword id="KW-0436">Ligase</keyword>
<keyword id="KW-0547">Nucleotide-binding</keyword>
<keyword id="KW-0648">Protein biosynthesis</keyword>
<keyword id="KW-1185">Reference proteome</keyword>
<reference key="1">
    <citation type="journal article" date="2001" name="Science">
        <title>The genome of the natural genetic engineer Agrobacterium tumefaciens C58.</title>
        <authorList>
            <person name="Wood D.W."/>
            <person name="Setubal J.C."/>
            <person name="Kaul R."/>
            <person name="Monks D.E."/>
            <person name="Kitajima J.P."/>
            <person name="Okura V.K."/>
            <person name="Zhou Y."/>
            <person name="Chen L."/>
            <person name="Wood G.E."/>
            <person name="Almeida N.F. Jr."/>
            <person name="Woo L."/>
            <person name="Chen Y."/>
            <person name="Paulsen I.T."/>
            <person name="Eisen J.A."/>
            <person name="Karp P.D."/>
            <person name="Bovee D. Sr."/>
            <person name="Chapman P."/>
            <person name="Clendenning J."/>
            <person name="Deatherage G."/>
            <person name="Gillet W."/>
            <person name="Grant C."/>
            <person name="Kutyavin T."/>
            <person name="Levy R."/>
            <person name="Li M.-J."/>
            <person name="McClelland E."/>
            <person name="Palmieri A."/>
            <person name="Raymond C."/>
            <person name="Rouse G."/>
            <person name="Saenphimmachak C."/>
            <person name="Wu Z."/>
            <person name="Romero P."/>
            <person name="Gordon D."/>
            <person name="Zhang S."/>
            <person name="Yoo H."/>
            <person name="Tao Y."/>
            <person name="Biddle P."/>
            <person name="Jung M."/>
            <person name="Krespan W."/>
            <person name="Perry M."/>
            <person name="Gordon-Kamm B."/>
            <person name="Liao L."/>
            <person name="Kim S."/>
            <person name="Hendrick C."/>
            <person name="Zhao Z.-Y."/>
            <person name="Dolan M."/>
            <person name="Chumley F."/>
            <person name="Tingey S.V."/>
            <person name="Tomb J.-F."/>
            <person name="Gordon M.P."/>
            <person name="Olson M.V."/>
            <person name="Nester E.W."/>
        </authorList>
    </citation>
    <scope>NUCLEOTIDE SEQUENCE [LARGE SCALE GENOMIC DNA]</scope>
    <source>
        <strain>C58 / ATCC 33970</strain>
    </source>
</reference>
<reference key="2">
    <citation type="journal article" date="2001" name="Science">
        <title>Genome sequence of the plant pathogen and biotechnology agent Agrobacterium tumefaciens C58.</title>
        <authorList>
            <person name="Goodner B."/>
            <person name="Hinkle G."/>
            <person name="Gattung S."/>
            <person name="Miller N."/>
            <person name="Blanchard M."/>
            <person name="Qurollo B."/>
            <person name="Goldman B.S."/>
            <person name="Cao Y."/>
            <person name="Askenazi M."/>
            <person name="Halling C."/>
            <person name="Mullin L."/>
            <person name="Houmiel K."/>
            <person name="Gordon J."/>
            <person name="Vaudin M."/>
            <person name="Iartchouk O."/>
            <person name="Epp A."/>
            <person name="Liu F."/>
            <person name="Wollam C."/>
            <person name="Allinger M."/>
            <person name="Doughty D."/>
            <person name="Scott C."/>
            <person name="Lappas C."/>
            <person name="Markelz B."/>
            <person name="Flanagan C."/>
            <person name="Crowell C."/>
            <person name="Gurson J."/>
            <person name="Lomo C."/>
            <person name="Sear C."/>
            <person name="Strub G."/>
            <person name="Cielo C."/>
            <person name="Slater S."/>
        </authorList>
    </citation>
    <scope>NUCLEOTIDE SEQUENCE [LARGE SCALE GENOMIC DNA]</scope>
    <source>
        <strain>C58 / ATCC 33970</strain>
    </source>
</reference>